<proteinExistence type="inferred from homology"/>
<reference key="1">
    <citation type="journal article" date="2009" name="J. Bacteriol.">
        <title>Genomic sequencing reveals regulatory mutations and recombinational events in the widely used MC4100 lineage of Escherichia coli K-12.</title>
        <authorList>
            <person name="Ferenci T."/>
            <person name="Zhou Z."/>
            <person name="Betteridge T."/>
            <person name="Ren Y."/>
            <person name="Liu Y."/>
            <person name="Feng L."/>
            <person name="Reeves P.R."/>
            <person name="Wang L."/>
        </authorList>
    </citation>
    <scope>NUCLEOTIDE SEQUENCE [LARGE SCALE GENOMIC DNA]</scope>
    <source>
        <strain>K12 / MC4100 / BW2952</strain>
    </source>
</reference>
<sequence length="271" mass="30303">MASENMTPQDYIGHHLNNLQLDLRTFSLVDPQNPPATFWTINIDSMFFSVVLGLLFLVLFRSVAKKATSGVPGKFQTAIELVIGFVNGSVKDMYHGKSKLIAPLALTIFVWVFLMNLMDLLPIDLLPYIAEHVLGLPALRVVPSADVNVTLSMALGVFILILFYSIKMKGIGGFTKELTLQPFNHWAFIPVNLILEGVSLLSKPVSLGLRLFGNMYAGELIFILIAGLLPWWSQWILNVPWAIFHILIITLQAFIFMVLTIVYLSMASEEH</sequence>
<name>ATP6_ECOBW</name>
<keyword id="KW-0066">ATP synthesis</keyword>
<keyword id="KW-0997">Cell inner membrane</keyword>
<keyword id="KW-1003">Cell membrane</keyword>
<keyword id="KW-0138">CF(0)</keyword>
<keyword id="KW-0375">Hydrogen ion transport</keyword>
<keyword id="KW-0406">Ion transport</keyword>
<keyword id="KW-0472">Membrane</keyword>
<keyword id="KW-0812">Transmembrane</keyword>
<keyword id="KW-1133">Transmembrane helix</keyword>
<keyword id="KW-0813">Transport</keyword>
<accession>C4ZZ16</accession>
<evidence type="ECO:0000255" key="1">
    <source>
        <dbReference type="HAMAP-Rule" id="MF_01393"/>
    </source>
</evidence>
<protein>
    <recommendedName>
        <fullName evidence="1">ATP synthase subunit a</fullName>
    </recommendedName>
    <alternativeName>
        <fullName evidence="1">ATP synthase F0 sector subunit a</fullName>
    </alternativeName>
    <alternativeName>
        <fullName evidence="1">F-ATPase subunit 6</fullName>
    </alternativeName>
</protein>
<organism>
    <name type="scientific">Escherichia coli (strain K12 / MC4100 / BW2952)</name>
    <dbReference type="NCBI Taxonomy" id="595496"/>
    <lineage>
        <taxon>Bacteria</taxon>
        <taxon>Pseudomonadati</taxon>
        <taxon>Pseudomonadota</taxon>
        <taxon>Gammaproteobacteria</taxon>
        <taxon>Enterobacterales</taxon>
        <taxon>Enterobacteriaceae</taxon>
        <taxon>Escherichia</taxon>
    </lineage>
</organism>
<feature type="chain" id="PRO_1000215144" description="ATP synthase subunit a">
    <location>
        <begin position="1"/>
        <end position="271"/>
    </location>
</feature>
<feature type="transmembrane region" description="Helical" evidence="1">
    <location>
        <begin position="40"/>
        <end position="60"/>
    </location>
</feature>
<feature type="transmembrane region" description="Helical" evidence="1">
    <location>
        <begin position="100"/>
        <end position="120"/>
    </location>
</feature>
<feature type="transmembrane region" description="Helical" evidence="1">
    <location>
        <begin position="146"/>
        <end position="166"/>
    </location>
</feature>
<feature type="transmembrane region" description="Helical" evidence="1">
    <location>
        <begin position="220"/>
        <end position="240"/>
    </location>
</feature>
<feature type="transmembrane region" description="Helical" evidence="1">
    <location>
        <begin position="242"/>
        <end position="262"/>
    </location>
</feature>
<dbReference type="EMBL" id="CP001396">
    <property type="protein sequence ID" value="ACR63062.1"/>
    <property type="molecule type" value="Genomic_DNA"/>
</dbReference>
<dbReference type="RefSeq" id="WP_000135625.1">
    <property type="nucleotide sequence ID" value="NC_012759.1"/>
</dbReference>
<dbReference type="SMR" id="C4ZZ16"/>
<dbReference type="GeneID" id="93778229"/>
<dbReference type="KEGG" id="ebw:BWG_3429"/>
<dbReference type="HOGENOM" id="CLU_041018_1_0_6"/>
<dbReference type="GO" id="GO:0005886">
    <property type="term" value="C:plasma membrane"/>
    <property type="evidence" value="ECO:0007669"/>
    <property type="project" value="UniProtKB-SubCell"/>
</dbReference>
<dbReference type="GO" id="GO:0045259">
    <property type="term" value="C:proton-transporting ATP synthase complex"/>
    <property type="evidence" value="ECO:0007669"/>
    <property type="project" value="UniProtKB-KW"/>
</dbReference>
<dbReference type="GO" id="GO:0046933">
    <property type="term" value="F:proton-transporting ATP synthase activity, rotational mechanism"/>
    <property type="evidence" value="ECO:0007669"/>
    <property type="project" value="UniProtKB-UniRule"/>
</dbReference>
<dbReference type="GO" id="GO:0042777">
    <property type="term" value="P:proton motive force-driven plasma membrane ATP synthesis"/>
    <property type="evidence" value="ECO:0007669"/>
    <property type="project" value="TreeGrafter"/>
</dbReference>
<dbReference type="CDD" id="cd00310">
    <property type="entry name" value="ATP-synt_Fo_a_6"/>
    <property type="match status" value="1"/>
</dbReference>
<dbReference type="FunFam" id="1.20.120.220:FF:000002">
    <property type="entry name" value="ATP synthase subunit a"/>
    <property type="match status" value="1"/>
</dbReference>
<dbReference type="Gene3D" id="1.20.120.220">
    <property type="entry name" value="ATP synthase, F0 complex, subunit A"/>
    <property type="match status" value="1"/>
</dbReference>
<dbReference type="HAMAP" id="MF_01393">
    <property type="entry name" value="ATP_synth_a_bact"/>
    <property type="match status" value="1"/>
</dbReference>
<dbReference type="InterPro" id="IPR045082">
    <property type="entry name" value="ATP_syn_F0_a_bact/chloroplast"/>
</dbReference>
<dbReference type="InterPro" id="IPR000568">
    <property type="entry name" value="ATP_synth_F0_asu"/>
</dbReference>
<dbReference type="InterPro" id="IPR023011">
    <property type="entry name" value="ATP_synth_F0_asu_AS"/>
</dbReference>
<dbReference type="InterPro" id="IPR035908">
    <property type="entry name" value="F0_ATP_A_sf"/>
</dbReference>
<dbReference type="NCBIfam" id="TIGR01131">
    <property type="entry name" value="ATP_synt_6_or_A"/>
    <property type="match status" value="1"/>
</dbReference>
<dbReference type="NCBIfam" id="NF004477">
    <property type="entry name" value="PRK05815.1-1"/>
    <property type="match status" value="1"/>
</dbReference>
<dbReference type="PANTHER" id="PTHR42823">
    <property type="entry name" value="ATP SYNTHASE SUBUNIT A, CHLOROPLASTIC"/>
    <property type="match status" value="1"/>
</dbReference>
<dbReference type="PANTHER" id="PTHR42823:SF3">
    <property type="entry name" value="ATP SYNTHASE SUBUNIT A, CHLOROPLASTIC"/>
    <property type="match status" value="1"/>
</dbReference>
<dbReference type="Pfam" id="PF00119">
    <property type="entry name" value="ATP-synt_A"/>
    <property type="match status" value="1"/>
</dbReference>
<dbReference type="PRINTS" id="PR00123">
    <property type="entry name" value="ATPASEA"/>
</dbReference>
<dbReference type="SUPFAM" id="SSF81336">
    <property type="entry name" value="F1F0 ATP synthase subunit A"/>
    <property type="match status" value="1"/>
</dbReference>
<dbReference type="PROSITE" id="PS00449">
    <property type="entry name" value="ATPASE_A"/>
    <property type="match status" value="1"/>
</dbReference>
<gene>
    <name evidence="1" type="primary">atpB</name>
    <name type="ordered locus">BWG_3429</name>
</gene>
<comment type="function">
    <text evidence="1">Key component of the proton channel; it plays a direct role in the translocation of protons across the membrane.</text>
</comment>
<comment type="subunit">
    <text evidence="1">F-type ATPases have 2 components, CF(1) - the catalytic core - and CF(0) - the membrane proton channel. CF(1) has five subunits: alpha(3), beta(3), gamma(1), delta(1), epsilon(1). CF(0) has three main subunits: a(1), b(2) and c(9-12). The alpha and beta chains form an alternating ring which encloses part of the gamma chain. CF(1) is attached to CF(0) by a central stalk formed by the gamma and epsilon chains, while a peripheral stalk is formed by the delta and b chains.</text>
</comment>
<comment type="subcellular location">
    <subcellularLocation>
        <location evidence="1">Cell inner membrane</location>
        <topology evidence="1">Multi-pass membrane protein</topology>
    </subcellularLocation>
</comment>
<comment type="similarity">
    <text evidence="1">Belongs to the ATPase A chain family.</text>
</comment>